<feature type="chain" id="PRO_1000082343" description="UDP-2,3-diacylglucosamine hydrolase">
    <location>
        <begin position="1"/>
        <end position="238"/>
    </location>
</feature>
<feature type="binding site" evidence="1">
    <location>
        <position position="8"/>
    </location>
    <ligand>
        <name>Mn(2+)</name>
        <dbReference type="ChEBI" id="CHEBI:29035"/>
        <label>1</label>
    </ligand>
</feature>
<feature type="binding site" evidence="1">
    <location>
        <position position="10"/>
    </location>
    <ligand>
        <name>Mn(2+)</name>
        <dbReference type="ChEBI" id="CHEBI:29035"/>
        <label>1</label>
    </ligand>
</feature>
<feature type="binding site" evidence="1">
    <location>
        <position position="41"/>
    </location>
    <ligand>
        <name>Mn(2+)</name>
        <dbReference type="ChEBI" id="CHEBI:29035"/>
        <label>1</label>
    </ligand>
</feature>
<feature type="binding site" evidence="1">
    <location>
        <position position="41"/>
    </location>
    <ligand>
        <name>Mn(2+)</name>
        <dbReference type="ChEBI" id="CHEBI:29035"/>
        <label>2</label>
    </ligand>
</feature>
<feature type="binding site" evidence="1">
    <location>
        <begin position="78"/>
        <end position="79"/>
    </location>
    <ligand>
        <name>substrate</name>
    </ligand>
</feature>
<feature type="binding site" evidence="1">
    <location>
        <position position="78"/>
    </location>
    <ligand>
        <name>Mn(2+)</name>
        <dbReference type="ChEBI" id="CHEBI:29035"/>
        <label>2</label>
    </ligand>
</feature>
<feature type="binding site" evidence="1">
    <location>
        <position position="113"/>
    </location>
    <ligand>
        <name>Mn(2+)</name>
        <dbReference type="ChEBI" id="CHEBI:29035"/>
        <label>2</label>
    </ligand>
</feature>
<feature type="binding site" evidence="1">
    <location>
        <position position="121"/>
    </location>
    <ligand>
        <name>substrate</name>
    </ligand>
</feature>
<feature type="binding site" evidence="1">
    <location>
        <position position="159"/>
    </location>
    <ligand>
        <name>substrate</name>
    </ligand>
</feature>
<feature type="binding site" evidence="1">
    <location>
        <position position="163"/>
    </location>
    <ligand>
        <name>substrate</name>
    </ligand>
</feature>
<feature type="binding site" evidence="1">
    <location>
        <position position="166"/>
    </location>
    <ligand>
        <name>substrate</name>
    </ligand>
</feature>
<feature type="binding site" evidence="1">
    <location>
        <position position="194"/>
    </location>
    <ligand>
        <name>Mn(2+)</name>
        <dbReference type="ChEBI" id="CHEBI:29035"/>
        <label>2</label>
    </ligand>
</feature>
<feature type="binding site" evidence="1">
    <location>
        <position position="194"/>
    </location>
    <ligand>
        <name>substrate</name>
    </ligand>
</feature>
<feature type="binding site" evidence="1">
    <location>
        <position position="196"/>
    </location>
    <ligand>
        <name>Mn(2+)</name>
        <dbReference type="ChEBI" id="CHEBI:29035"/>
        <label>1</label>
    </ligand>
</feature>
<organism>
    <name type="scientific">Shewanella pealeana (strain ATCC 700345 / ANG-SQ1)</name>
    <dbReference type="NCBI Taxonomy" id="398579"/>
    <lineage>
        <taxon>Bacteria</taxon>
        <taxon>Pseudomonadati</taxon>
        <taxon>Pseudomonadota</taxon>
        <taxon>Gammaproteobacteria</taxon>
        <taxon>Alteromonadales</taxon>
        <taxon>Shewanellaceae</taxon>
        <taxon>Shewanella</taxon>
    </lineage>
</organism>
<name>LPXH_SHEPA</name>
<gene>
    <name evidence="1" type="primary">lpxH</name>
    <name type="ordered locus">Spea_2686</name>
</gene>
<dbReference type="EC" id="3.6.1.54" evidence="1"/>
<dbReference type="EMBL" id="CP000851">
    <property type="protein sequence ID" value="ABV88006.1"/>
    <property type="molecule type" value="Genomic_DNA"/>
</dbReference>
<dbReference type="RefSeq" id="WP_012155912.1">
    <property type="nucleotide sequence ID" value="NC_009901.1"/>
</dbReference>
<dbReference type="SMR" id="A8H619"/>
<dbReference type="STRING" id="398579.Spea_2686"/>
<dbReference type="KEGG" id="spl:Spea_2686"/>
<dbReference type="eggNOG" id="COG2908">
    <property type="taxonomic scope" value="Bacteria"/>
</dbReference>
<dbReference type="HOGENOM" id="CLU_074586_0_0_6"/>
<dbReference type="OrthoDB" id="9783283at2"/>
<dbReference type="UniPathway" id="UPA00359">
    <property type="reaction ID" value="UER00480"/>
</dbReference>
<dbReference type="Proteomes" id="UP000002608">
    <property type="component" value="Chromosome"/>
</dbReference>
<dbReference type="GO" id="GO:0005737">
    <property type="term" value="C:cytoplasm"/>
    <property type="evidence" value="ECO:0007669"/>
    <property type="project" value="InterPro"/>
</dbReference>
<dbReference type="GO" id="GO:0019897">
    <property type="term" value="C:extrinsic component of plasma membrane"/>
    <property type="evidence" value="ECO:0007669"/>
    <property type="project" value="UniProtKB-UniRule"/>
</dbReference>
<dbReference type="GO" id="GO:0030145">
    <property type="term" value="F:manganese ion binding"/>
    <property type="evidence" value="ECO:0007669"/>
    <property type="project" value="UniProtKB-UniRule"/>
</dbReference>
<dbReference type="GO" id="GO:0008758">
    <property type="term" value="F:UDP-2,3-diacylglucosamine hydrolase activity"/>
    <property type="evidence" value="ECO:0007669"/>
    <property type="project" value="UniProtKB-UniRule"/>
</dbReference>
<dbReference type="GO" id="GO:0009245">
    <property type="term" value="P:lipid A biosynthetic process"/>
    <property type="evidence" value="ECO:0007669"/>
    <property type="project" value="UniProtKB-UniRule"/>
</dbReference>
<dbReference type="CDD" id="cd07398">
    <property type="entry name" value="MPP_YbbF-LpxH"/>
    <property type="match status" value="1"/>
</dbReference>
<dbReference type="Gene3D" id="3.60.21.10">
    <property type="match status" value="1"/>
</dbReference>
<dbReference type="HAMAP" id="MF_00575">
    <property type="entry name" value="LpxH"/>
    <property type="match status" value="1"/>
</dbReference>
<dbReference type="InterPro" id="IPR004843">
    <property type="entry name" value="Calcineurin-like_PHP_ApaH"/>
</dbReference>
<dbReference type="InterPro" id="IPR043461">
    <property type="entry name" value="LpxH-like"/>
</dbReference>
<dbReference type="InterPro" id="IPR029052">
    <property type="entry name" value="Metallo-depent_PP-like"/>
</dbReference>
<dbReference type="InterPro" id="IPR010138">
    <property type="entry name" value="UDP-diacylglucosamine_Hdrlase"/>
</dbReference>
<dbReference type="NCBIfam" id="TIGR01854">
    <property type="entry name" value="lipid_A_lpxH"/>
    <property type="match status" value="1"/>
</dbReference>
<dbReference type="NCBIfam" id="NF003743">
    <property type="entry name" value="PRK05340.1"/>
    <property type="match status" value="1"/>
</dbReference>
<dbReference type="PANTHER" id="PTHR34990:SF1">
    <property type="entry name" value="UDP-2,3-DIACYLGLUCOSAMINE HYDROLASE"/>
    <property type="match status" value="1"/>
</dbReference>
<dbReference type="PANTHER" id="PTHR34990">
    <property type="entry name" value="UDP-2,3-DIACYLGLUCOSAMINE HYDROLASE-RELATED"/>
    <property type="match status" value="1"/>
</dbReference>
<dbReference type="Pfam" id="PF00149">
    <property type="entry name" value="Metallophos"/>
    <property type="match status" value="1"/>
</dbReference>
<dbReference type="SUPFAM" id="SSF56300">
    <property type="entry name" value="Metallo-dependent phosphatases"/>
    <property type="match status" value="1"/>
</dbReference>
<sequence length="238" mass="27029">MRTLFVGDLHLSADRPDITQAFLEFLDTQLHDTDALYILGDLFEVWVGDDIAEPFVNQLVDAIKHASEKLPVYFIHGNRDFLIGEAFAKRCGMTLLPEVYSLDLYGVSTVILHGDSLCTLDKSYQRFRAFRNQGWAKWLYAHLPKSKRLGIAAKLRAKSQSSNQQKSYTIMDVEPDAVMDLLDATQTQQMIHGHTHRPDIHQLAHGKRRIVVGDWYEQGSMLSVSQDGVELIELPFGK</sequence>
<comment type="function">
    <text evidence="1">Hydrolyzes the pyrophosphate bond of UDP-2,3-diacylglucosamine to yield 2,3-diacylglucosamine 1-phosphate (lipid X) and UMP by catalyzing the attack of water at the alpha-P atom. Involved in the biosynthesis of lipid A, a phosphorylated glycolipid that anchors the lipopolysaccharide to the outer membrane of the cell.</text>
</comment>
<comment type="catalytic activity">
    <reaction evidence="1">
        <text>UDP-2-N,3-O-bis[(3R)-3-hydroxytetradecanoyl]-alpha-D-glucosamine + H2O = 2-N,3-O-bis[(3R)-3-hydroxytetradecanoyl]-alpha-D-glucosaminyl 1-phosphate + UMP + 2 H(+)</text>
        <dbReference type="Rhea" id="RHEA:25213"/>
        <dbReference type="ChEBI" id="CHEBI:15377"/>
        <dbReference type="ChEBI" id="CHEBI:15378"/>
        <dbReference type="ChEBI" id="CHEBI:57865"/>
        <dbReference type="ChEBI" id="CHEBI:57957"/>
        <dbReference type="ChEBI" id="CHEBI:78847"/>
        <dbReference type="EC" id="3.6.1.54"/>
    </reaction>
</comment>
<comment type="cofactor">
    <cofactor evidence="1">
        <name>Mn(2+)</name>
        <dbReference type="ChEBI" id="CHEBI:29035"/>
    </cofactor>
    <text evidence="1">Binds 2 Mn(2+) ions per subunit in a binuclear metal center.</text>
</comment>
<comment type="pathway">
    <text evidence="1">Glycolipid biosynthesis; lipid IV(A) biosynthesis; lipid IV(A) from (3R)-3-hydroxytetradecanoyl-[acyl-carrier-protein] and UDP-N-acetyl-alpha-D-glucosamine: step 4/6.</text>
</comment>
<comment type="subcellular location">
    <subcellularLocation>
        <location evidence="1">Cell inner membrane</location>
        <topology evidence="1">Peripheral membrane protein</topology>
        <orientation evidence="1">Cytoplasmic side</orientation>
    </subcellularLocation>
</comment>
<comment type="similarity">
    <text evidence="1">Belongs to the LpxH family.</text>
</comment>
<keyword id="KW-0997">Cell inner membrane</keyword>
<keyword id="KW-1003">Cell membrane</keyword>
<keyword id="KW-0378">Hydrolase</keyword>
<keyword id="KW-0441">Lipid A biosynthesis</keyword>
<keyword id="KW-0444">Lipid biosynthesis</keyword>
<keyword id="KW-0443">Lipid metabolism</keyword>
<keyword id="KW-0464">Manganese</keyword>
<keyword id="KW-0472">Membrane</keyword>
<keyword id="KW-0479">Metal-binding</keyword>
<keyword id="KW-1185">Reference proteome</keyword>
<evidence type="ECO:0000255" key="1">
    <source>
        <dbReference type="HAMAP-Rule" id="MF_00575"/>
    </source>
</evidence>
<accession>A8H619</accession>
<reference key="1">
    <citation type="submission" date="2007-10" db="EMBL/GenBank/DDBJ databases">
        <title>Complete sequence of Shewanella pealeana ATCC 700345.</title>
        <authorList>
            <consortium name="US DOE Joint Genome Institute"/>
            <person name="Copeland A."/>
            <person name="Lucas S."/>
            <person name="Lapidus A."/>
            <person name="Barry K."/>
            <person name="Glavina del Rio T."/>
            <person name="Dalin E."/>
            <person name="Tice H."/>
            <person name="Pitluck S."/>
            <person name="Chertkov O."/>
            <person name="Brettin T."/>
            <person name="Bruce D."/>
            <person name="Detter J.C."/>
            <person name="Han C."/>
            <person name="Schmutz J."/>
            <person name="Larimer F."/>
            <person name="Land M."/>
            <person name="Hauser L."/>
            <person name="Kyrpides N."/>
            <person name="Kim E."/>
            <person name="Zhao J.-S.Z."/>
            <person name="Manno D."/>
            <person name="Hawari J."/>
            <person name="Richardson P."/>
        </authorList>
    </citation>
    <scope>NUCLEOTIDE SEQUENCE [LARGE SCALE GENOMIC DNA]</scope>
    <source>
        <strain>ATCC 700345 / ANG-SQ1</strain>
    </source>
</reference>
<proteinExistence type="inferred from homology"/>
<protein>
    <recommendedName>
        <fullName evidence="1">UDP-2,3-diacylglucosamine hydrolase</fullName>
        <ecNumber evidence="1">3.6.1.54</ecNumber>
    </recommendedName>
    <alternativeName>
        <fullName evidence="1">UDP-2,3-diacylglucosamine diphosphatase</fullName>
    </alternativeName>
</protein>